<comment type="function">
    <text evidence="1 3">Inhibits the angiotensin-converting enzyme (ACE) (IC(50)=2.03 uM) (PubMed:27163886). May act as an indirect hypotensive agent (Probable). In vivo, is not toxic and does not induce lesions and microscopic abnormalitie in rat liver (PubMed:27163886).</text>
</comment>
<comment type="subcellular location">
    <subcellularLocation>
        <location evidence="1">Secreted</location>
    </subcellularLocation>
    <subcellularLocation>
        <location evidence="1">Nematocyst</location>
    </subcellularLocation>
</comment>
<comment type="mass spectrometry" mass="966.099" method="MALDI" evidence="1">
    <text>Average mass.</text>
</comment>
<comment type="similarity">
    <text evidence="3">Belongs to the bradykinin-potentiating peptide family.</text>
</comment>
<dbReference type="GO" id="GO:0005576">
    <property type="term" value="C:extracellular region"/>
    <property type="evidence" value="ECO:0007669"/>
    <property type="project" value="UniProtKB-SubCell"/>
</dbReference>
<dbReference type="GO" id="GO:0042151">
    <property type="term" value="C:nematocyst"/>
    <property type="evidence" value="ECO:0007669"/>
    <property type="project" value="UniProtKB-SubCell"/>
</dbReference>
<dbReference type="GO" id="GO:0008217">
    <property type="term" value="P:regulation of blood pressure"/>
    <property type="evidence" value="ECO:0007669"/>
    <property type="project" value="UniProtKB-KW"/>
</dbReference>
<organism>
    <name type="scientific">Chiropsoides quadrigatus</name>
    <name type="common">Box jellyfish</name>
    <name type="synonym">Chiropsalmus quadrigatus</name>
    <dbReference type="NCBI Taxonomy" id="130731"/>
    <lineage>
        <taxon>Eukaryota</taxon>
        <taxon>Metazoa</taxon>
        <taxon>Cnidaria</taxon>
        <taxon>Cubozoa</taxon>
        <taxon>Chirodropida</taxon>
        <taxon>Chiropsalmidae</taxon>
        <taxon>Chiropsoides</taxon>
    </lineage>
</organism>
<name>BPP_CHIQU</name>
<proteinExistence type="evidence at protein level"/>
<accession>P0DQQ8</accession>
<protein>
    <recommendedName>
        <fullName evidence="2">Angiotensin-converting enzyme inhibitory peptide</fullName>
        <shortName evidence="2">ACE inhibitory peptide</shortName>
    </recommendedName>
</protein>
<feature type="peptide" id="PRO_0000453747" description="Angiotensin-converting enzyme inhibitory peptide" evidence="1">
    <location>
        <begin position="1"/>
        <end position="10"/>
    </location>
</feature>
<sequence length="10" mass="965">ACPGPNPGRP</sequence>
<reference key="1">
    <citation type="journal article" date="2016" name="Toxicon">
        <title>In vitro angiotensin I converting enzyme inhibition by a peptide isolated from Chiropsalmus quadrigatus Haeckel (box jellyfish) venom hydrolysate.</title>
        <authorList>
            <person name="So P.B."/>
            <person name="Rubio P."/>
            <person name="Lirio S."/>
            <person name="Macabeo A.P."/>
            <person name="Huang H.Y."/>
            <person name="Corpuz M.J."/>
            <person name="Villaflores O.B."/>
        </authorList>
    </citation>
    <scope>PROTEIN SEQUENCE</scope>
    <scope>MASS SPECTROMETRY</scope>
    <scope>SUBCELLULAR LOCATION</scope>
    <scope>FUNCTION</scope>
    <source>
        <tissue>Tentacle</tissue>
    </source>
</reference>
<keyword id="KW-0903">Direct protein sequencing</keyword>
<keyword id="KW-0382">Hypotensive agent</keyword>
<keyword id="KW-0166">Nematocyst</keyword>
<keyword id="KW-0964">Secreted</keyword>
<evidence type="ECO:0000269" key="1">
    <source>
    </source>
</evidence>
<evidence type="ECO:0000303" key="2">
    <source>
    </source>
</evidence>
<evidence type="ECO:0000305" key="3"/>